<evidence type="ECO:0000255" key="1">
    <source>
        <dbReference type="HAMAP-Rule" id="MF_01569"/>
    </source>
</evidence>
<feature type="chain" id="PRO_0000248720" description="Proline--tRNA ligase">
    <location>
        <begin position="1"/>
        <end position="568"/>
    </location>
</feature>
<protein>
    <recommendedName>
        <fullName evidence="1">Proline--tRNA ligase</fullName>
        <ecNumber evidence="1">6.1.1.15</ecNumber>
    </recommendedName>
    <alternativeName>
        <fullName evidence="1">Prolyl-tRNA synthetase</fullName>
        <shortName evidence="1">ProRS</shortName>
    </alternativeName>
</protein>
<accession>Q720A3</accession>
<gene>
    <name evidence="1" type="primary">proS</name>
    <name type="ordered locus">LMOf2365_1336</name>
</gene>
<sequence length="568" mass="63369">MRQTMTFIPTLKEVPADAEVKSHQLLLRAGFIRQTASGIYSYLPLATLMLRKIETIIREELEAIGAAELLMPALQPAELWQESGRWNDYGPELMRLKDRASRDFALGPTHEEVITALLRDEVKSYKRLPLTLYQIQTKFRDEKRPRFGLLRGREFIMKDAYSFHATSESLDEVYNLMHQAYSNIFTRCGLEFRSVIADSGSIGGNESKEFMALSDIGEDTIAYSDASDYAANTEMAPVLYMEKKSHELEKDMEKVATPDQKSIADIVEFLEVPIEKTMKSMLYQVDDEVIMVLVRGDHEVNDIKIKNALDATNVELVDPAVAVELLGANFGSLGPINVPENTRVFADNAVKDIVNAVVGANEDGFHYINVNPDRDFSVTSYFDLRMIQVGDLSPDGQGVIKFAEGIEVGHIFKLGTKYSEAMNATILDENGRAQPIIMGCYGIGVSRILSAIAEQSNDENGFVWDKQISPFDLHLIPVNMKSEEQVAFAETLYSSLQDAGFSVLIDDRAERAGVKFADADLIGLPIRITVGKKAAEGVVEVKIRKTGEMIEVRQDELLNTLPILFGDK</sequence>
<name>SYP_LISMF</name>
<reference key="1">
    <citation type="journal article" date="2004" name="Nucleic Acids Res.">
        <title>Whole genome comparisons of serotype 4b and 1/2a strains of the food-borne pathogen Listeria monocytogenes reveal new insights into the core genome components of this species.</title>
        <authorList>
            <person name="Nelson K.E."/>
            <person name="Fouts D.E."/>
            <person name="Mongodin E.F."/>
            <person name="Ravel J."/>
            <person name="DeBoy R.T."/>
            <person name="Kolonay J.F."/>
            <person name="Rasko D.A."/>
            <person name="Angiuoli S.V."/>
            <person name="Gill S.R."/>
            <person name="Paulsen I.T."/>
            <person name="Peterson J.D."/>
            <person name="White O."/>
            <person name="Nelson W.C."/>
            <person name="Nierman W.C."/>
            <person name="Beanan M.J."/>
            <person name="Brinkac L.M."/>
            <person name="Daugherty S.C."/>
            <person name="Dodson R.J."/>
            <person name="Durkin A.S."/>
            <person name="Madupu R."/>
            <person name="Haft D.H."/>
            <person name="Selengut J."/>
            <person name="Van Aken S.E."/>
            <person name="Khouri H.M."/>
            <person name="Fedorova N."/>
            <person name="Forberger H.A."/>
            <person name="Tran B."/>
            <person name="Kathariou S."/>
            <person name="Wonderling L.D."/>
            <person name="Uhlich G.A."/>
            <person name="Bayles D.O."/>
            <person name="Luchansky J.B."/>
            <person name="Fraser C.M."/>
        </authorList>
    </citation>
    <scope>NUCLEOTIDE SEQUENCE [LARGE SCALE GENOMIC DNA]</scope>
    <source>
        <strain>F2365</strain>
    </source>
</reference>
<comment type="function">
    <text evidence="1">Catalyzes the attachment of proline to tRNA(Pro) in a two-step reaction: proline is first activated by ATP to form Pro-AMP and then transferred to the acceptor end of tRNA(Pro). As ProRS can inadvertently accommodate and process non-cognate amino acids such as alanine and cysteine, to avoid such errors it has two additional distinct editing activities against alanine. One activity is designated as 'pretransfer' editing and involves the tRNA(Pro)-independent hydrolysis of activated Ala-AMP. The other activity is designated 'posttransfer' editing and involves deacylation of mischarged Ala-tRNA(Pro). The misacylated Cys-tRNA(Pro) is not edited by ProRS.</text>
</comment>
<comment type="catalytic activity">
    <reaction evidence="1">
        <text>tRNA(Pro) + L-proline + ATP = L-prolyl-tRNA(Pro) + AMP + diphosphate</text>
        <dbReference type="Rhea" id="RHEA:14305"/>
        <dbReference type="Rhea" id="RHEA-COMP:9700"/>
        <dbReference type="Rhea" id="RHEA-COMP:9702"/>
        <dbReference type="ChEBI" id="CHEBI:30616"/>
        <dbReference type="ChEBI" id="CHEBI:33019"/>
        <dbReference type="ChEBI" id="CHEBI:60039"/>
        <dbReference type="ChEBI" id="CHEBI:78442"/>
        <dbReference type="ChEBI" id="CHEBI:78532"/>
        <dbReference type="ChEBI" id="CHEBI:456215"/>
        <dbReference type="EC" id="6.1.1.15"/>
    </reaction>
</comment>
<comment type="subunit">
    <text evidence="1">Homodimer.</text>
</comment>
<comment type="subcellular location">
    <subcellularLocation>
        <location evidence="1">Cytoplasm</location>
    </subcellularLocation>
</comment>
<comment type="domain">
    <text evidence="1">Consists of three domains: the N-terminal catalytic domain, the editing domain and the C-terminal anticodon-binding domain.</text>
</comment>
<comment type="similarity">
    <text evidence="1">Belongs to the class-II aminoacyl-tRNA synthetase family. ProS type 1 subfamily.</text>
</comment>
<keyword id="KW-0030">Aminoacyl-tRNA synthetase</keyword>
<keyword id="KW-0067">ATP-binding</keyword>
<keyword id="KW-0963">Cytoplasm</keyword>
<keyword id="KW-0436">Ligase</keyword>
<keyword id="KW-0547">Nucleotide-binding</keyword>
<keyword id="KW-0648">Protein biosynthesis</keyword>
<dbReference type="EC" id="6.1.1.15" evidence="1"/>
<dbReference type="EMBL" id="AE017262">
    <property type="protein sequence ID" value="AAT04111.1"/>
    <property type="molecule type" value="Genomic_DNA"/>
</dbReference>
<dbReference type="RefSeq" id="WP_003726416.1">
    <property type="nucleotide sequence ID" value="NC_002973.6"/>
</dbReference>
<dbReference type="SMR" id="Q720A3"/>
<dbReference type="KEGG" id="lmf:LMOf2365_1336"/>
<dbReference type="HOGENOM" id="CLU_016739_0_0_9"/>
<dbReference type="GO" id="GO:0005829">
    <property type="term" value="C:cytosol"/>
    <property type="evidence" value="ECO:0007669"/>
    <property type="project" value="TreeGrafter"/>
</dbReference>
<dbReference type="GO" id="GO:0002161">
    <property type="term" value="F:aminoacyl-tRNA deacylase activity"/>
    <property type="evidence" value="ECO:0007669"/>
    <property type="project" value="InterPro"/>
</dbReference>
<dbReference type="GO" id="GO:0005524">
    <property type="term" value="F:ATP binding"/>
    <property type="evidence" value="ECO:0007669"/>
    <property type="project" value="UniProtKB-UniRule"/>
</dbReference>
<dbReference type="GO" id="GO:0140096">
    <property type="term" value="F:catalytic activity, acting on a protein"/>
    <property type="evidence" value="ECO:0007669"/>
    <property type="project" value="UniProtKB-ARBA"/>
</dbReference>
<dbReference type="GO" id="GO:0004827">
    <property type="term" value="F:proline-tRNA ligase activity"/>
    <property type="evidence" value="ECO:0007669"/>
    <property type="project" value="UniProtKB-UniRule"/>
</dbReference>
<dbReference type="GO" id="GO:0016740">
    <property type="term" value="F:transferase activity"/>
    <property type="evidence" value="ECO:0007669"/>
    <property type="project" value="UniProtKB-ARBA"/>
</dbReference>
<dbReference type="GO" id="GO:0006433">
    <property type="term" value="P:prolyl-tRNA aminoacylation"/>
    <property type="evidence" value="ECO:0007669"/>
    <property type="project" value="UniProtKB-UniRule"/>
</dbReference>
<dbReference type="CDD" id="cd04334">
    <property type="entry name" value="ProRS-INS"/>
    <property type="match status" value="1"/>
</dbReference>
<dbReference type="CDD" id="cd00861">
    <property type="entry name" value="ProRS_anticodon_short"/>
    <property type="match status" value="1"/>
</dbReference>
<dbReference type="CDD" id="cd00779">
    <property type="entry name" value="ProRS_core_prok"/>
    <property type="match status" value="1"/>
</dbReference>
<dbReference type="FunFam" id="3.30.930.10:FF:000043">
    <property type="entry name" value="Proline--tRNA ligase"/>
    <property type="match status" value="1"/>
</dbReference>
<dbReference type="FunFam" id="3.30.930.10:FF:000088">
    <property type="entry name" value="Proline--tRNA ligase"/>
    <property type="match status" value="1"/>
</dbReference>
<dbReference type="FunFam" id="3.40.50.800:FF:000011">
    <property type="entry name" value="Proline--tRNA ligase"/>
    <property type="match status" value="1"/>
</dbReference>
<dbReference type="Gene3D" id="3.40.50.800">
    <property type="entry name" value="Anticodon-binding domain"/>
    <property type="match status" value="1"/>
</dbReference>
<dbReference type="Gene3D" id="3.30.930.10">
    <property type="entry name" value="Bira Bifunctional Protein, Domain 2"/>
    <property type="match status" value="2"/>
</dbReference>
<dbReference type="HAMAP" id="MF_01569">
    <property type="entry name" value="Pro_tRNA_synth_type1"/>
    <property type="match status" value="1"/>
</dbReference>
<dbReference type="InterPro" id="IPR002314">
    <property type="entry name" value="aa-tRNA-synt_IIb"/>
</dbReference>
<dbReference type="InterPro" id="IPR006195">
    <property type="entry name" value="aa-tRNA-synth_II"/>
</dbReference>
<dbReference type="InterPro" id="IPR045864">
    <property type="entry name" value="aa-tRNA-synth_II/BPL/LPL"/>
</dbReference>
<dbReference type="InterPro" id="IPR004154">
    <property type="entry name" value="Anticodon-bd"/>
</dbReference>
<dbReference type="InterPro" id="IPR036621">
    <property type="entry name" value="Anticodon-bd_dom_sf"/>
</dbReference>
<dbReference type="InterPro" id="IPR002316">
    <property type="entry name" value="Pro-tRNA-ligase_IIa"/>
</dbReference>
<dbReference type="InterPro" id="IPR004500">
    <property type="entry name" value="Pro-tRNA-synth_IIa_bac-type"/>
</dbReference>
<dbReference type="InterPro" id="IPR023717">
    <property type="entry name" value="Pro-tRNA-Synthase_IIa_type1"/>
</dbReference>
<dbReference type="InterPro" id="IPR050062">
    <property type="entry name" value="Pro-tRNA_synthetase"/>
</dbReference>
<dbReference type="InterPro" id="IPR044140">
    <property type="entry name" value="ProRS_anticodon_short"/>
</dbReference>
<dbReference type="InterPro" id="IPR033730">
    <property type="entry name" value="ProRS_core_prok"/>
</dbReference>
<dbReference type="InterPro" id="IPR036754">
    <property type="entry name" value="YbaK/aa-tRNA-synt-asso_dom_sf"/>
</dbReference>
<dbReference type="InterPro" id="IPR007214">
    <property type="entry name" value="YbaK/aa-tRNA-synth-assoc-dom"/>
</dbReference>
<dbReference type="NCBIfam" id="NF006625">
    <property type="entry name" value="PRK09194.1"/>
    <property type="match status" value="1"/>
</dbReference>
<dbReference type="NCBIfam" id="TIGR00409">
    <property type="entry name" value="proS_fam_II"/>
    <property type="match status" value="1"/>
</dbReference>
<dbReference type="PANTHER" id="PTHR42753">
    <property type="entry name" value="MITOCHONDRIAL RIBOSOME PROTEIN L39/PROLYL-TRNA LIGASE FAMILY MEMBER"/>
    <property type="match status" value="1"/>
</dbReference>
<dbReference type="PANTHER" id="PTHR42753:SF2">
    <property type="entry name" value="PROLINE--TRNA LIGASE"/>
    <property type="match status" value="1"/>
</dbReference>
<dbReference type="Pfam" id="PF03129">
    <property type="entry name" value="HGTP_anticodon"/>
    <property type="match status" value="1"/>
</dbReference>
<dbReference type="Pfam" id="PF00587">
    <property type="entry name" value="tRNA-synt_2b"/>
    <property type="match status" value="1"/>
</dbReference>
<dbReference type="Pfam" id="PF04073">
    <property type="entry name" value="tRNA_edit"/>
    <property type="match status" value="1"/>
</dbReference>
<dbReference type="PIRSF" id="PIRSF001535">
    <property type="entry name" value="ProRS_1"/>
    <property type="match status" value="1"/>
</dbReference>
<dbReference type="PRINTS" id="PR01046">
    <property type="entry name" value="TRNASYNTHPRO"/>
</dbReference>
<dbReference type="SUPFAM" id="SSF52954">
    <property type="entry name" value="Class II aaRS ABD-related"/>
    <property type="match status" value="1"/>
</dbReference>
<dbReference type="SUPFAM" id="SSF55681">
    <property type="entry name" value="Class II aaRS and biotin synthetases"/>
    <property type="match status" value="1"/>
</dbReference>
<dbReference type="SUPFAM" id="SSF55826">
    <property type="entry name" value="YbaK/ProRS associated domain"/>
    <property type="match status" value="1"/>
</dbReference>
<dbReference type="PROSITE" id="PS50862">
    <property type="entry name" value="AA_TRNA_LIGASE_II"/>
    <property type="match status" value="1"/>
</dbReference>
<proteinExistence type="inferred from homology"/>
<organism>
    <name type="scientific">Listeria monocytogenes serotype 4b (strain F2365)</name>
    <dbReference type="NCBI Taxonomy" id="265669"/>
    <lineage>
        <taxon>Bacteria</taxon>
        <taxon>Bacillati</taxon>
        <taxon>Bacillota</taxon>
        <taxon>Bacilli</taxon>
        <taxon>Bacillales</taxon>
        <taxon>Listeriaceae</taxon>
        <taxon>Listeria</taxon>
    </lineage>
</organism>